<organism>
    <name type="scientific">Maridesulfovibrio salexigens (strain ATCC 14822 / DSM 2638 / NCIMB 8403 / VKM B-1763)</name>
    <name type="common">Desulfovibrio salexigens</name>
    <dbReference type="NCBI Taxonomy" id="526222"/>
    <lineage>
        <taxon>Bacteria</taxon>
        <taxon>Pseudomonadati</taxon>
        <taxon>Thermodesulfobacteriota</taxon>
        <taxon>Desulfovibrionia</taxon>
        <taxon>Desulfovibrionales</taxon>
        <taxon>Desulfovibrionaceae</taxon>
        <taxon>Maridesulfovibrio</taxon>
    </lineage>
</organism>
<accession>C6BSL0</accession>
<dbReference type="EC" id="3.5.1.44" evidence="1"/>
<dbReference type="EMBL" id="CP001649">
    <property type="protein sequence ID" value="ACS81466.1"/>
    <property type="molecule type" value="Genomic_DNA"/>
</dbReference>
<dbReference type="SMR" id="C6BSL0"/>
<dbReference type="STRING" id="526222.Desal_3417"/>
<dbReference type="KEGG" id="dsa:Desal_3417"/>
<dbReference type="eggNOG" id="COG1871">
    <property type="taxonomic scope" value="Bacteria"/>
</dbReference>
<dbReference type="HOGENOM" id="CLU_087854_1_1_7"/>
<dbReference type="OrthoDB" id="9807202at2"/>
<dbReference type="Proteomes" id="UP000002601">
    <property type="component" value="Chromosome"/>
</dbReference>
<dbReference type="GO" id="GO:0050568">
    <property type="term" value="F:protein-glutamine glutaminase activity"/>
    <property type="evidence" value="ECO:0007669"/>
    <property type="project" value="UniProtKB-UniRule"/>
</dbReference>
<dbReference type="GO" id="GO:0006935">
    <property type="term" value="P:chemotaxis"/>
    <property type="evidence" value="ECO:0007669"/>
    <property type="project" value="UniProtKB-UniRule"/>
</dbReference>
<dbReference type="CDD" id="cd16352">
    <property type="entry name" value="CheD"/>
    <property type="match status" value="1"/>
</dbReference>
<dbReference type="Gene3D" id="3.30.1330.200">
    <property type="match status" value="1"/>
</dbReference>
<dbReference type="HAMAP" id="MF_01440">
    <property type="entry name" value="CheD"/>
    <property type="match status" value="1"/>
</dbReference>
<dbReference type="InterPro" id="IPR038592">
    <property type="entry name" value="CheD-like_sf"/>
</dbReference>
<dbReference type="InterPro" id="IPR005659">
    <property type="entry name" value="Chemorcpt_Glu_NH3ase_CheD"/>
</dbReference>
<dbReference type="InterPro" id="IPR011324">
    <property type="entry name" value="Cytotoxic_necrot_fac-like_cat"/>
</dbReference>
<dbReference type="PANTHER" id="PTHR35147">
    <property type="entry name" value="CHEMORECEPTOR GLUTAMINE DEAMIDASE CHED-RELATED"/>
    <property type="match status" value="1"/>
</dbReference>
<dbReference type="PANTHER" id="PTHR35147:SF1">
    <property type="entry name" value="CHEMORECEPTOR GLUTAMINE DEAMIDASE CHED-RELATED"/>
    <property type="match status" value="1"/>
</dbReference>
<dbReference type="Pfam" id="PF03975">
    <property type="entry name" value="CheD"/>
    <property type="match status" value="1"/>
</dbReference>
<dbReference type="SUPFAM" id="SSF64438">
    <property type="entry name" value="CNF1/YfiH-like putative cysteine hydrolases"/>
    <property type="match status" value="1"/>
</dbReference>
<reference key="1">
    <citation type="submission" date="2009-06" db="EMBL/GenBank/DDBJ databases">
        <title>Complete sequence of Desulfovibrio salexigens DSM 2638.</title>
        <authorList>
            <consortium name="US DOE Joint Genome Institute"/>
            <person name="Lucas S."/>
            <person name="Copeland A."/>
            <person name="Lapidus A."/>
            <person name="Glavina del Rio T."/>
            <person name="Tice H."/>
            <person name="Bruce D."/>
            <person name="Goodwin L."/>
            <person name="Pitluck S."/>
            <person name="Munk A.C."/>
            <person name="Brettin T."/>
            <person name="Detter J.C."/>
            <person name="Han C."/>
            <person name="Tapia R."/>
            <person name="Larimer F."/>
            <person name="Land M."/>
            <person name="Hauser L."/>
            <person name="Kyrpides N."/>
            <person name="Anderson I."/>
            <person name="Wall J.D."/>
            <person name="Arkin A.P."/>
            <person name="Dehal P."/>
            <person name="Chivian D."/>
            <person name="Giles B."/>
            <person name="Hazen T.C."/>
        </authorList>
    </citation>
    <scope>NUCLEOTIDE SEQUENCE [LARGE SCALE GENOMIC DNA]</scope>
    <source>
        <strain>ATCC 14822 / DSM 2638 / NCIMB 8403 / VKM B-1763</strain>
    </source>
</reference>
<gene>
    <name evidence="1" type="primary">cheD</name>
    <name type="ordered locus">Desal_3417</name>
</gene>
<protein>
    <recommendedName>
        <fullName evidence="1">Probable chemoreceptor glutamine deamidase CheD</fullName>
        <ecNumber evidence="1">3.5.1.44</ecNumber>
    </recommendedName>
</protein>
<feature type="chain" id="PRO_1000215285" description="Probable chemoreceptor glutamine deamidase CheD">
    <location>
        <begin position="1"/>
        <end position="170"/>
    </location>
</feature>
<proteinExistence type="inferred from homology"/>
<comment type="function">
    <text evidence="1">Probably deamidates glutamine residues to glutamate on methyl-accepting chemotaxis receptors (MCPs), playing an important role in chemotaxis.</text>
</comment>
<comment type="catalytic activity">
    <reaction evidence="1">
        <text>L-glutaminyl-[protein] + H2O = L-glutamyl-[protein] + NH4(+)</text>
        <dbReference type="Rhea" id="RHEA:16441"/>
        <dbReference type="Rhea" id="RHEA-COMP:10207"/>
        <dbReference type="Rhea" id="RHEA-COMP:10208"/>
        <dbReference type="ChEBI" id="CHEBI:15377"/>
        <dbReference type="ChEBI" id="CHEBI:28938"/>
        <dbReference type="ChEBI" id="CHEBI:29973"/>
        <dbReference type="ChEBI" id="CHEBI:30011"/>
        <dbReference type="EC" id="3.5.1.44"/>
    </reaction>
</comment>
<comment type="similarity">
    <text evidence="1">Belongs to the CheD family.</text>
</comment>
<evidence type="ECO:0000255" key="1">
    <source>
        <dbReference type="HAMAP-Rule" id="MF_01440"/>
    </source>
</evidence>
<sequence>MPQNQSDIRRVFLHTGDAYLGVKPTIVSTVLGSCVAISMFSPRKRQGIICHAFLPSRAEIKDVNEPSIQICRYVDTAVDHLLKSMRRLGVRKNELEVKLFGGATGLSYSQVRPSCALGIGNRNVDAALENLEAKGLKPVSMDVGGNVGRKLLFCTYSGDVWIKRLEKHMF</sequence>
<keyword id="KW-0145">Chemotaxis</keyword>
<keyword id="KW-0378">Hydrolase</keyword>
<keyword id="KW-1185">Reference proteome</keyword>
<name>CHED_MARSD</name>